<gene>
    <name evidence="1" type="primary">mtnD</name>
    <name type="ordered locus">PST_2431</name>
</gene>
<reference key="1">
    <citation type="journal article" date="2008" name="Proc. Natl. Acad. Sci. U.S.A.">
        <title>Nitrogen fixation island and rhizosphere competence traits in the genome of root-associated Pseudomonas stutzeri A1501.</title>
        <authorList>
            <person name="Yan Y."/>
            <person name="Yang J."/>
            <person name="Dou Y."/>
            <person name="Chen M."/>
            <person name="Ping S."/>
            <person name="Peng J."/>
            <person name="Lu W."/>
            <person name="Zhang W."/>
            <person name="Yao Z."/>
            <person name="Li H."/>
            <person name="Liu W."/>
            <person name="He S."/>
            <person name="Geng L."/>
            <person name="Zhang X."/>
            <person name="Yang F."/>
            <person name="Yu H."/>
            <person name="Zhan Y."/>
            <person name="Li D."/>
            <person name="Lin Z."/>
            <person name="Wang Y."/>
            <person name="Elmerich C."/>
            <person name="Lin M."/>
            <person name="Jin Q."/>
        </authorList>
    </citation>
    <scope>NUCLEOTIDE SEQUENCE [LARGE SCALE GENOMIC DNA]</scope>
    <source>
        <strain>A1501</strain>
    </source>
</reference>
<organism>
    <name type="scientific">Stutzerimonas stutzeri (strain A1501)</name>
    <name type="common">Pseudomonas stutzeri</name>
    <dbReference type="NCBI Taxonomy" id="379731"/>
    <lineage>
        <taxon>Bacteria</taxon>
        <taxon>Pseudomonadati</taxon>
        <taxon>Pseudomonadota</taxon>
        <taxon>Gammaproteobacteria</taxon>
        <taxon>Pseudomonadales</taxon>
        <taxon>Pseudomonadaceae</taxon>
        <taxon>Stutzerimonas</taxon>
    </lineage>
</organism>
<protein>
    <recommendedName>
        <fullName evidence="1">Acireductone dioxygenase</fullName>
    </recommendedName>
    <alternativeName>
        <fullName evidence="1">1,2-dihydroxy-3-keto-5-methylthiopentene dioxygenase</fullName>
        <shortName evidence="1">DHK-MTPene dioxygenase</shortName>
    </alternativeName>
    <alternativeName>
        <fullName evidence="1">Acireductone dioxygenase (Fe(2+)-requiring)</fullName>
        <shortName evidence="1">ARD'</shortName>
        <shortName evidence="1">Fe-ARD</shortName>
        <ecNumber evidence="1">1.13.11.54</ecNumber>
    </alternativeName>
    <alternativeName>
        <fullName evidence="1">Acireductone dioxygenase (Ni(2+)-requiring)</fullName>
        <shortName evidence="1">ARD</shortName>
        <shortName evidence="1">Ni-ARD</shortName>
        <ecNumber evidence="1">1.13.11.53</ecNumber>
    </alternativeName>
</protein>
<name>MTND_STUS1</name>
<dbReference type="EC" id="1.13.11.54" evidence="1"/>
<dbReference type="EC" id="1.13.11.53" evidence="1"/>
<dbReference type="EMBL" id="CP000304">
    <property type="protein sequence ID" value="ABP80083.1"/>
    <property type="molecule type" value="Genomic_DNA"/>
</dbReference>
<dbReference type="RefSeq" id="WP_011913546.1">
    <property type="nucleotide sequence ID" value="NC_009434.1"/>
</dbReference>
<dbReference type="SMR" id="A4VM82"/>
<dbReference type="KEGG" id="psa:PST_2431"/>
<dbReference type="eggNOG" id="COG1791">
    <property type="taxonomic scope" value="Bacteria"/>
</dbReference>
<dbReference type="HOGENOM" id="CLU_125400_0_0_6"/>
<dbReference type="UniPathway" id="UPA00904">
    <property type="reaction ID" value="UER00878"/>
</dbReference>
<dbReference type="Proteomes" id="UP000000233">
    <property type="component" value="Chromosome"/>
</dbReference>
<dbReference type="GO" id="GO:0010308">
    <property type="term" value="F:acireductone dioxygenase (Ni2+-requiring) activity"/>
    <property type="evidence" value="ECO:0007669"/>
    <property type="project" value="UniProtKB-UniRule"/>
</dbReference>
<dbReference type="GO" id="GO:0010309">
    <property type="term" value="F:acireductone dioxygenase [iron(II)-requiring] activity"/>
    <property type="evidence" value="ECO:0007669"/>
    <property type="project" value="UniProtKB-UniRule"/>
</dbReference>
<dbReference type="GO" id="GO:0005506">
    <property type="term" value="F:iron ion binding"/>
    <property type="evidence" value="ECO:0007669"/>
    <property type="project" value="UniProtKB-UniRule"/>
</dbReference>
<dbReference type="GO" id="GO:0016151">
    <property type="term" value="F:nickel cation binding"/>
    <property type="evidence" value="ECO:0007669"/>
    <property type="project" value="UniProtKB-UniRule"/>
</dbReference>
<dbReference type="GO" id="GO:0019509">
    <property type="term" value="P:L-methionine salvage from methylthioadenosine"/>
    <property type="evidence" value="ECO:0007669"/>
    <property type="project" value="UniProtKB-UniRule"/>
</dbReference>
<dbReference type="GO" id="GO:0019284">
    <property type="term" value="P:L-methionine salvage from S-adenosylmethionine"/>
    <property type="evidence" value="ECO:0007669"/>
    <property type="project" value="InterPro"/>
</dbReference>
<dbReference type="CDD" id="cd02232">
    <property type="entry name" value="cupin_ARD"/>
    <property type="match status" value="1"/>
</dbReference>
<dbReference type="Gene3D" id="2.60.120.10">
    <property type="entry name" value="Jelly Rolls"/>
    <property type="match status" value="1"/>
</dbReference>
<dbReference type="HAMAP" id="MF_01682">
    <property type="entry name" value="Salvage_MtnD"/>
    <property type="match status" value="1"/>
</dbReference>
<dbReference type="InterPro" id="IPR004313">
    <property type="entry name" value="ARD"/>
</dbReference>
<dbReference type="InterPro" id="IPR023956">
    <property type="entry name" value="ARD_bac"/>
</dbReference>
<dbReference type="InterPro" id="IPR014710">
    <property type="entry name" value="RmlC-like_jellyroll"/>
</dbReference>
<dbReference type="InterPro" id="IPR011051">
    <property type="entry name" value="RmlC_Cupin_sf"/>
</dbReference>
<dbReference type="PANTHER" id="PTHR23418">
    <property type="entry name" value="ACIREDUCTONE DIOXYGENASE"/>
    <property type="match status" value="1"/>
</dbReference>
<dbReference type="PANTHER" id="PTHR23418:SF0">
    <property type="entry name" value="ACIREDUCTONE DIOXYGENASE"/>
    <property type="match status" value="1"/>
</dbReference>
<dbReference type="Pfam" id="PF03079">
    <property type="entry name" value="ARD"/>
    <property type="match status" value="1"/>
</dbReference>
<dbReference type="SUPFAM" id="SSF51182">
    <property type="entry name" value="RmlC-like cupins"/>
    <property type="match status" value="1"/>
</dbReference>
<comment type="function">
    <text evidence="1">Catalyzes 2 different reactions between oxygen and the acireductone 1,2-dihydroxy-3-keto-5-methylthiopentene (DHK-MTPene) depending upon the metal bound in the active site. Fe-containing acireductone dioxygenase (Fe-ARD) produces formate and 2-keto-4-methylthiobutyrate (KMTB), the alpha-ketoacid precursor of methionine in the methionine recycle pathway. Ni-containing acireductone dioxygenase (Ni-ARD) produces methylthiopropionate, carbon monoxide and formate, and does not lie on the methionine recycle pathway.</text>
</comment>
<comment type="catalytic activity">
    <reaction evidence="1">
        <text>1,2-dihydroxy-5-(methylsulfanyl)pent-1-en-3-one + O2 = 3-(methylsulfanyl)propanoate + CO + formate + 2 H(+)</text>
        <dbReference type="Rhea" id="RHEA:14161"/>
        <dbReference type="ChEBI" id="CHEBI:15378"/>
        <dbReference type="ChEBI" id="CHEBI:15379"/>
        <dbReference type="ChEBI" id="CHEBI:15740"/>
        <dbReference type="ChEBI" id="CHEBI:17245"/>
        <dbReference type="ChEBI" id="CHEBI:49016"/>
        <dbReference type="ChEBI" id="CHEBI:49252"/>
        <dbReference type="EC" id="1.13.11.53"/>
    </reaction>
</comment>
<comment type="catalytic activity">
    <reaction evidence="1">
        <text>1,2-dihydroxy-5-(methylsulfanyl)pent-1-en-3-one + O2 = 4-methylsulfanyl-2-oxobutanoate + formate + 2 H(+)</text>
        <dbReference type="Rhea" id="RHEA:24504"/>
        <dbReference type="ChEBI" id="CHEBI:15378"/>
        <dbReference type="ChEBI" id="CHEBI:15379"/>
        <dbReference type="ChEBI" id="CHEBI:15740"/>
        <dbReference type="ChEBI" id="CHEBI:16723"/>
        <dbReference type="ChEBI" id="CHEBI:49252"/>
        <dbReference type="EC" id="1.13.11.54"/>
    </reaction>
</comment>
<comment type="cofactor">
    <cofactor evidence="1">
        <name>Fe(2+)</name>
        <dbReference type="ChEBI" id="CHEBI:29033"/>
    </cofactor>
    <text evidence="1">Binds 1 Fe(2+) cation per monomer.</text>
</comment>
<comment type="cofactor">
    <cofactor evidence="1">
        <name>Ni(2+)</name>
        <dbReference type="ChEBI" id="CHEBI:49786"/>
    </cofactor>
    <text evidence="1">Binds 1 nickel ion per monomer.</text>
</comment>
<comment type="pathway">
    <text evidence="1">Amino-acid biosynthesis; L-methionine biosynthesis via salvage pathway; L-methionine from S-methyl-5-thio-alpha-D-ribose 1-phosphate: step 5/6.</text>
</comment>
<comment type="subunit">
    <text evidence="1">Monomer.</text>
</comment>
<comment type="similarity">
    <text evidence="1">Belongs to the acireductone dioxygenase (ARD) family.</text>
</comment>
<feature type="chain" id="PRO_0000359222" description="Acireductone dioxygenase">
    <location>
        <begin position="1"/>
        <end position="181"/>
    </location>
</feature>
<feature type="binding site" evidence="1">
    <location>
        <position position="97"/>
    </location>
    <ligand>
        <name>Fe(2+)</name>
        <dbReference type="ChEBI" id="CHEBI:29033"/>
    </ligand>
</feature>
<feature type="binding site" evidence="1">
    <location>
        <position position="97"/>
    </location>
    <ligand>
        <name>Ni(2+)</name>
        <dbReference type="ChEBI" id="CHEBI:49786"/>
    </ligand>
</feature>
<feature type="binding site" evidence="1">
    <location>
        <position position="99"/>
    </location>
    <ligand>
        <name>Fe(2+)</name>
        <dbReference type="ChEBI" id="CHEBI:29033"/>
    </ligand>
</feature>
<feature type="binding site" evidence="1">
    <location>
        <position position="99"/>
    </location>
    <ligand>
        <name>Ni(2+)</name>
        <dbReference type="ChEBI" id="CHEBI:49786"/>
    </ligand>
</feature>
<feature type="binding site" evidence="1">
    <location>
        <position position="103"/>
    </location>
    <ligand>
        <name>Fe(2+)</name>
        <dbReference type="ChEBI" id="CHEBI:29033"/>
    </ligand>
</feature>
<feature type="binding site" evidence="1">
    <location>
        <position position="103"/>
    </location>
    <ligand>
        <name>Ni(2+)</name>
        <dbReference type="ChEBI" id="CHEBI:49786"/>
    </ligand>
</feature>
<feature type="binding site" evidence="1">
    <location>
        <position position="141"/>
    </location>
    <ligand>
        <name>Fe(2+)</name>
        <dbReference type="ChEBI" id="CHEBI:29033"/>
    </ligand>
</feature>
<feature type="binding site" evidence="1">
    <location>
        <position position="141"/>
    </location>
    <ligand>
        <name>Ni(2+)</name>
        <dbReference type="ChEBI" id="CHEBI:49786"/>
    </ligand>
</feature>
<feature type="site" description="May play a role in metal incorporation in vivo" evidence="1">
    <location>
        <position position="96"/>
    </location>
</feature>
<feature type="site" description="May play a role in transmitting local conformational changes" evidence="1">
    <location>
        <position position="102"/>
    </location>
</feature>
<feature type="site" description="Important to generate the dianion" evidence="1">
    <location>
        <position position="105"/>
    </location>
</feature>
<proteinExistence type="inferred from homology"/>
<evidence type="ECO:0000255" key="1">
    <source>
        <dbReference type="HAMAP-Rule" id="MF_01682"/>
    </source>
</evidence>
<sequence length="181" mass="20504">MSVLSVYHESRPEQPLKVLTHLEDIAATLAEVGVQLERWDASAPVAAGASQEDVIAAYRPQIDRLMAERGYVTVDVISVSRDHPQKDELRAKFLDEHRHAEDEVRFFVAGRGLFTLHIEDMVYAVLCEKNDLISVPAGTRHWFDMGEQPSFVAIRLFNNPDGWTAQFTGERIADQFPRLDD</sequence>
<keyword id="KW-0028">Amino-acid biosynthesis</keyword>
<keyword id="KW-0223">Dioxygenase</keyword>
<keyword id="KW-0408">Iron</keyword>
<keyword id="KW-0479">Metal-binding</keyword>
<keyword id="KW-0486">Methionine biosynthesis</keyword>
<keyword id="KW-0533">Nickel</keyword>
<keyword id="KW-0560">Oxidoreductase</keyword>
<keyword id="KW-1185">Reference proteome</keyword>
<accession>A4VM82</accession>